<accession>A8H3W9</accession>
<evidence type="ECO:0000255" key="1">
    <source>
        <dbReference type="HAMAP-Rule" id="MF_00749"/>
    </source>
</evidence>
<evidence type="ECO:0000256" key="2">
    <source>
        <dbReference type="SAM" id="MobiDB-lite"/>
    </source>
</evidence>
<reference key="1">
    <citation type="submission" date="2007-10" db="EMBL/GenBank/DDBJ databases">
        <title>Complete sequence of Shewanella pealeana ATCC 700345.</title>
        <authorList>
            <consortium name="US DOE Joint Genome Institute"/>
            <person name="Copeland A."/>
            <person name="Lucas S."/>
            <person name="Lapidus A."/>
            <person name="Barry K."/>
            <person name="Glavina del Rio T."/>
            <person name="Dalin E."/>
            <person name="Tice H."/>
            <person name="Pitluck S."/>
            <person name="Chertkov O."/>
            <person name="Brettin T."/>
            <person name="Bruce D."/>
            <person name="Detter J.C."/>
            <person name="Han C."/>
            <person name="Schmutz J."/>
            <person name="Larimer F."/>
            <person name="Land M."/>
            <person name="Hauser L."/>
            <person name="Kyrpides N."/>
            <person name="Kim E."/>
            <person name="Zhao J.-S.Z."/>
            <person name="Manno D."/>
            <person name="Hawari J."/>
            <person name="Richardson P."/>
        </authorList>
    </citation>
    <scope>NUCLEOTIDE SEQUENCE [LARGE SCALE GENOMIC DNA]</scope>
    <source>
        <strain>ATCC 700345 / ANG-SQ1</strain>
    </source>
</reference>
<protein>
    <recommendedName>
        <fullName evidence="1">RNA chaperone ProQ</fullName>
    </recommendedName>
</protein>
<organism>
    <name type="scientific">Shewanella pealeana (strain ATCC 700345 / ANG-SQ1)</name>
    <dbReference type="NCBI Taxonomy" id="398579"/>
    <lineage>
        <taxon>Bacteria</taxon>
        <taxon>Pseudomonadati</taxon>
        <taxon>Pseudomonadota</taxon>
        <taxon>Gammaproteobacteria</taxon>
        <taxon>Alteromonadales</taxon>
        <taxon>Shewanellaceae</taxon>
        <taxon>Shewanella</taxon>
    </lineage>
</organism>
<comment type="function">
    <text evidence="1">RNA chaperone with significant RNA binding, RNA strand exchange and RNA duplexing activities.</text>
</comment>
<comment type="subcellular location">
    <subcellularLocation>
        <location evidence="1">Cytoplasm</location>
    </subcellularLocation>
</comment>
<comment type="similarity">
    <text evidence="1">Belongs to the ProQ family.</text>
</comment>
<sequence length="212" mass="23259">MESTEKLTDTNAILAYLYETFPLCFIAEGETKPLKIGLFQDLAERLADDSKVSKTQLRIALRRYTSSWRYLKCVKAGAQRIDLDGNACGELEQEHIDHAAATLKESQDKAKAKRVAQAKSANPAAKTAKKPVKKPVAKRPKPAQSSKPAKEPVVAENLTPAVLTELKPNQRVNVKLGKAPVAGVILDIKKEDVQVQLDSGLTIKVRAEHILL</sequence>
<keyword id="KW-0143">Chaperone</keyword>
<keyword id="KW-0963">Cytoplasm</keyword>
<keyword id="KW-1185">Reference proteome</keyword>
<keyword id="KW-0694">RNA-binding</keyword>
<name>PROQ_SHEPA</name>
<feature type="chain" id="PRO_1000083491" description="RNA chaperone ProQ">
    <location>
        <begin position="1"/>
        <end position="212"/>
    </location>
</feature>
<feature type="region of interest" description="Disordered" evidence="2">
    <location>
        <begin position="107"/>
        <end position="153"/>
    </location>
</feature>
<feature type="compositionally biased region" description="Low complexity" evidence="2">
    <location>
        <begin position="117"/>
        <end position="126"/>
    </location>
</feature>
<feature type="compositionally biased region" description="Basic residues" evidence="2">
    <location>
        <begin position="127"/>
        <end position="141"/>
    </location>
</feature>
<proteinExistence type="inferred from homology"/>
<dbReference type="EMBL" id="CP000851">
    <property type="protein sequence ID" value="ABV87256.1"/>
    <property type="molecule type" value="Genomic_DNA"/>
</dbReference>
<dbReference type="RefSeq" id="WP_012155174.1">
    <property type="nucleotide sequence ID" value="NC_009901.1"/>
</dbReference>
<dbReference type="SMR" id="A8H3W9"/>
<dbReference type="STRING" id="398579.Spea_1934"/>
<dbReference type="KEGG" id="spl:Spea_1934"/>
<dbReference type="eggNOG" id="COG3109">
    <property type="taxonomic scope" value="Bacteria"/>
</dbReference>
<dbReference type="HOGENOM" id="CLU_113254_0_0_6"/>
<dbReference type="OrthoDB" id="8421419at2"/>
<dbReference type="Proteomes" id="UP000002608">
    <property type="component" value="Chromosome"/>
</dbReference>
<dbReference type="GO" id="GO:0005829">
    <property type="term" value="C:cytosol"/>
    <property type="evidence" value="ECO:0007669"/>
    <property type="project" value="TreeGrafter"/>
</dbReference>
<dbReference type="GO" id="GO:0033592">
    <property type="term" value="F:RNA strand annealing activity"/>
    <property type="evidence" value="ECO:0007669"/>
    <property type="project" value="UniProtKB-UniRule"/>
</dbReference>
<dbReference type="GO" id="GO:0034057">
    <property type="term" value="F:RNA strand-exchange activity"/>
    <property type="evidence" value="ECO:0007669"/>
    <property type="project" value="UniProtKB-UniRule"/>
</dbReference>
<dbReference type="GO" id="GO:0010608">
    <property type="term" value="P:post-transcriptional regulation of gene expression"/>
    <property type="evidence" value="ECO:0007669"/>
    <property type="project" value="InterPro"/>
</dbReference>
<dbReference type="FunFam" id="1.10.1710.10:FF:000001">
    <property type="entry name" value="RNA chaperone ProQ"/>
    <property type="match status" value="1"/>
</dbReference>
<dbReference type="Gene3D" id="1.10.1710.10">
    <property type="entry name" value="ProQ/FinO domain"/>
    <property type="match status" value="1"/>
</dbReference>
<dbReference type="HAMAP" id="MF_00749">
    <property type="entry name" value="ProQ"/>
    <property type="match status" value="1"/>
</dbReference>
<dbReference type="InterPro" id="IPR023529">
    <property type="entry name" value="ProQ"/>
</dbReference>
<dbReference type="InterPro" id="IPR016103">
    <property type="entry name" value="ProQ/FinO"/>
</dbReference>
<dbReference type="InterPro" id="IPR036442">
    <property type="entry name" value="ProQ/FinO_sf"/>
</dbReference>
<dbReference type="InterPro" id="IPR035236">
    <property type="entry name" value="ProQ_C"/>
</dbReference>
<dbReference type="NCBIfam" id="NF003434">
    <property type="entry name" value="PRK04950.1"/>
    <property type="match status" value="1"/>
</dbReference>
<dbReference type="PANTHER" id="PTHR38106">
    <property type="entry name" value="RNA CHAPERONE PROQ"/>
    <property type="match status" value="1"/>
</dbReference>
<dbReference type="PANTHER" id="PTHR38106:SF1">
    <property type="entry name" value="RNA CHAPERONE PROQ"/>
    <property type="match status" value="1"/>
</dbReference>
<dbReference type="Pfam" id="PF04352">
    <property type="entry name" value="ProQ"/>
    <property type="match status" value="1"/>
</dbReference>
<dbReference type="Pfam" id="PF17516">
    <property type="entry name" value="ProQ_C"/>
    <property type="match status" value="1"/>
</dbReference>
<dbReference type="SMART" id="SM00945">
    <property type="entry name" value="ProQ"/>
    <property type="match status" value="1"/>
</dbReference>
<dbReference type="SUPFAM" id="SSF48657">
    <property type="entry name" value="FinO-like"/>
    <property type="match status" value="1"/>
</dbReference>
<gene>
    <name evidence="1" type="primary">proQ</name>
    <name type="ordered locus">Spea_1934</name>
</gene>